<accession>B5YK66</accession>
<dbReference type="EC" id="1.2.1.41" evidence="1"/>
<dbReference type="EMBL" id="CP001147">
    <property type="protein sequence ID" value="ACI21133.1"/>
    <property type="molecule type" value="Genomic_DNA"/>
</dbReference>
<dbReference type="RefSeq" id="YP_002248631.1">
    <property type="nucleotide sequence ID" value="NC_011296.1"/>
</dbReference>
<dbReference type="SMR" id="B5YK66"/>
<dbReference type="FunCoup" id="B5YK66">
    <property type="interactions" value="343"/>
</dbReference>
<dbReference type="STRING" id="289376.THEYE_A0790"/>
<dbReference type="EnsemblBacteria" id="ACI21133">
    <property type="protein sequence ID" value="ACI21133"/>
    <property type="gene ID" value="THEYE_A0790"/>
</dbReference>
<dbReference type="KEGG" id="tye:THEYE_A0790"/>
<dbReference type="PATRIC" id="fig|289376.4.peg.780"/>
<dbReference type="eggNOG" id="COG0014">
    <property type="taxonomic scope" value="Bacteria"/>
</dbReference>
<dbReference type="HOGENOM" id="CLU_030231_0_0_0"/>
<dbReference type="InParanoid" id="B5YK66"/>
<dbReference type="OrthoDB" id="9809970at2"/>
<dbReference type="UniPathway" id="UPA00098">
    <property type="reaction ID" value="UER00360"/>
</dbReference>
<dbReference type="Proteomes" id="UP000000718">
    <property type="component" value="Chromosome"/>
</dbReference>
<dbReference type="GO" id="GO:0005737">
    <property type="term" value="C:cytoplasm"/>
    <property type="evidence" value="ECO:0007669"/>
    <property type="project" value="UniProtKB-SubCell"/>
</dbReference>
<dbReference type="GO" id="GO:0004350">
    <property type="term" value="F:glutamate-5-semialdehyde dehydrogenase activity"/>
    <property type="evidence" value="ECO:0000318"/>
    <property type="project" value="GO_Central"/>
</dbReference>
<dbReference type="GO" id="GO:0050661">
    <property type="term" value="F:NADP binding"/>
    <property type="evidence" value="ECO:0007669"/>
    <property type="project" value="InterPro"/>
</dbReference>
<dbReference type="GO" id="GO:0055129">
    <property type="term" value="P:L-proline biosynthetic process"/>
    <property type="evidence" value="ECO:0007669"/>
    <property type="project" value="UniProtKB-UniRule"/>
</dbReference>
<dbReference type="CDD" id="cd07079">
    <property type="entry name" value="ALDH_F18-19_ProA-GPR"/>
    <property type="match status" value="1"/>
</dbReference>
<dbReference type="FunFam" id="3.40.309.10:FF:000006">
    <property type="entry name" value="Gamma-glutamyl phosphate reductase"/>
    <property type="match status" value="1"/>
</dbReference>
<dbReference type="Gene3D" id="3.40.605.10">
    <property type="entry name" value="Aldehyde Dehydrogenase, Chain A, domain 1"/>
    <property type="match status" value="1"/>
</dbReference>
<dbReference type="Gene3D" id="3.40.309.10">
    <property type="entry name" value="Aldehyde Dehydrogenase, Chain A, domain 2"/>
    <property type="match status" value="1"/>
</dbReference>
<dbReference type="HAMAP" id="MF_00412">
    <property type="entry name" value="ProA"/>
    <property type="match status" value="1"/>
</dbReference>
<dbReference type="InterPro" id="IPR016161">
    <property type="entry name" value="Ald_DH/histidinol_DH"/>
</dbReference>
<dbReference type="InterPro" id="IPR016163">
    <property type="entry name" value="Ald_DH_C"/>
</dbReference>
<dbReference type="InterPro" id="IPR016162">
    <property type="entry name" value="Ald_DH_N"/>
</dbReference>
<dbReference type="InterPro" id="IPR015590">
    <property type="entry name" value="Aldehyde_DH_dom"/>
</dbReference>
<dbReference type="InterPro" id="IPR020593">
    <property type="entry name" value="G-glutamylP_reductase_CS"/>
</dbReference>
<dbReference type="InterPro" id="IPR012134">
    <property type="entry name" value="Glu-5-SA_DH"/>
</dbReference>
<dbReference type="InterPro" id="IPR000965">
    <property type="entry name" value="GPR_dom"/>
</dbReference>
<dbReference type="NCBIfam" id="NF001221">
    <property type="entry name" value="PRK00197.1"/>
    <property type="match status" value="1"/>
</dbReference>
<dbReference type="NCBIfam" id="TIGR00407">
    <property type="entry name" value="proA"/>
    <property type="match status" value="1"/>
</dbReference>
<dbReference type="PANTHER" id="PTHR11063:SF8">
    <property type="entry name" value="DELTA-1-PYRROLINE-5-CARBOXYLATE SYNTHASE"/>
    <property type="match status" value="1"/>
</dbReference>
<dbReference type="PANTHER" id="PTHR11063">
    <property type="entry name" value="GLUTAMATE SEMIALDEHYDE DEHYDROGENASE"/>
    <property type="match status" value="1"/>
</dbReference>
<dbReference type="Pfam" id="PF00171">
    <property type="entry name" value="Aldedh"/>
    <property type="match status" value="1"/>
</dbReference>
<dbReference type="PIRSF" id="PIRSF000151">
    <property type="entry name" value="GPR"/>
    <property type="match status" value="1"/>
</dbReference>
<dbReference type="SUPFAM" id="SSF53720">
    <property type="entry name" value="ALDH-like"/>
    <property type="match status" value="1"/>
</dbReference>
<dbReference type="PROSITE" id="PS01223">
    <property type="entry name" value="PROA"/>
    <property type="match status" value="1"/>
</dbReference>
<gene>
    <name evidence="1" type="primary">proA</name>
    <name type="ordered locus">THEYE_A0790</name>
</gene>
<proteinExistence type="inferred from homology"/>
<keyword id="KW-0028">Amino-acid biosynthesis</keyword>
<keyword id="KW-0963">Cytoplasm</keyword>
<keyword id="KW-0521">NADP</keyword>
<keyword id="KW-0560">Oxidoreductase</keyword>
<keyword id="KW-0641">Proline biosynthesis</keyword>
<keyword id="KW-1185">Reference proteome</keyword>
<name>PROA_THEYD</name>
<sequence length="418" mass="46594">MEIKQLVLNKAKEAKESSRFIAKASTDLKNKIIVRMADYLKQNKDELIKANRIDVENAQKKGISKALIDRLTLTEKRIDEMIKGLQEVVALPDPVGEITKMWLRPNGMQVGKMRVPIGVIGVIYEARPNVTVDVTGLCLKAGNSVVLRGGSEAINSNIALVKILKEALKDEGMHEGVVTYIDISQREAVLEMIKLEGIIDLIIPRGGEGLIRTVTENSRIPVLKHYKGVCHVFVDRDADLAMAEEICFNAKVQRPATCNAMETMLVDENIAKKFLPNMLKKFEDAGVELKGCLKTKKIYPKVKDVKEEDFYQEYLDLVLNVKVVKNIDEAIEHITKYGSAHSDSIVTKDYNKAMKFLKEVDSSAVFVNASTRLNDGYQFGLGAEIGISTDKIHARGPMGLEELTCTKFIVFGNGQIRQ</sequence>
<evidence type="ECO:0000255" key="1">
    <source>
        <dbReference type="HAMAP-Rule" id="MF_00412"/>
    </source>
</evidence>
<feature type="chain" id="PRO_1000193670" description="Gamma-glutamyl phosphate reductase">
    <location>
        <begin position="1"/>
        <end position="418"/>
    </location>
</feature>
<organism>
    <name type="scientific">Thermodesulfovibrio yellowstonii (strain ATCC 51303 / DSM 11347 / YP87)</name>
    <dbReference type="NCBI Taxonomy" id="289376"/>
    <lineage>
        <taxon>Bacteria</taxon>
        <taxon>Pseudomonadati</taxon>
        <taxon>Nitrospirota</taxon>
        <taxon>Thermodesulfovibrionia</taxon>
        <taxon>Thermodesulfovibrionales</taxon>
        <taxon>Thermodesulfovibrionaceae</taxon>
        <taxon>Thermodesulfovibrio</taxon>
    </lineage>
</organism>
<protein>
    <recommendedName>
        <fullName evidence="1">Gamma-glutamyl phosphate reductase</fullName>
        <shortName evidence="1">GPR</shortName>
        <ecNumber evidence="1">1.2.1.41</ecNumber>
    </recommendedName>
    <alternativeName>
        <fullName evidence="1">Glutamate-5-semialdehyde dehydrogenase</fullName>
    </alternativeName>
    <alternativeName>
        <fullName evidence="1">Glutamyl-gamma-semialdehyde dehydrogenase</fullName>
        <shortName evidence="1">GSA dehydrogenase</shortName>
    </alternativeName>
</protein>
<comment type="function">
    <text evidence="1">Catalyzes the NADPH-dependent reduction of L-glutamate 5-phosphate into L-glutamate 5-semialdehyde and phosphate. The product spontaneously undergoes cyclization to form 1-pyrroline-5-carboxylate.</text>
</comment>
<comment type="catalytic activity">
    <reaction evidence="1">
        <text>L-glutamate 5-semialdehyde + phosphate + NADP(+) = L-glutamyl 5-phosphate + NADPH + H(+)</text>
        <dbReference type="Rhea" id="RHEA:19541"/>
        <dbReference type="ChEBI" id="CHEBI:15378"/>
        <dbReference type="ChEBI" id="CHEBI:43474"/>
        <dbReference type="ChEBI" id="CHEBI:57783"/>
        <dbReference type="ChEBI" id="CHEBI:58066"/>
        <dbReference type="ChEBI" id="CHEBI:58274"/>
        <dbReference type="ChEBI" id="CHEBI:58349"/>
        <dbReference type="EC" id="1.2.1.41"/>
    </reaction>
</comment>
<comment type="pathway">
    <text evidence="1">Amino-acid biosynthesis; L-proline biosynthesis; L-glutamate 5-semialdehyde from L-glutamate: step 2/2.</text>
</comment>
<comment type="subcellular location">
    <subcellularLocation>
        <location evidence="1">Cytoplasm</location>
    </subcellularLocation>
</comment>
<comment type="similarity">
    <text evidence="1">Belongs to the gamma-glutamyl phosphate reductase family.</text>
</comment>
<reference key="1">
    <citation type="submission" date="2008-08" db="EMBL/GenBank/DDBJ databases">
        <title>The complete genome sequence of Thermodesulfovibrio yellowstonii strain ATCC 51303 / DSM 11347 / YP87.</title>
        <authorList>
            <person name="Dodson R.J."/>
            <person name="Durkin A.S."/>
            <person name="Wu M."/>
            <person name="Eisen J."/>
            <person name="Sutton G."/>
        </authorList>
    </citation>
    <scope>NUCLEOTIDE SEQUENCE [LARGE SCALE GENOMIC DNA]</scope>
    <source>
        <strain>ATCC 51303 / DSM 11347 / YP87</strain>
    </source>
</reference>